<sequence length="202" mass="21595">MSYLGVGVSPGNVPVYHGSNLKVIDKRVRLAELVLRCLICGLGVLAAVLVGTDTQVKEIFSIQKKARFTDMKALVFLVIANGIAAAYSLLQGVRCVVGMVRGSALFSKPLAWAIFSGDQMMAYLTVAAVAAAAQSAVFAKLGQPELQWMKICNMYGKFCNQVGEGIASALLVSVSMVVLSCISAFSLFRLYGANKGKDCTRW</sequence>
<protein>
    <recommendedName>
        <fullName>CASP-like protein 2B1</fullName>
        <shortName>RcCASPL2B1</shortName>
    </recommendedName>
</protein>
<proteinExistence type="evidence at transcript level"/>
<comment type="subunit">
    <text evidence="1">Homodimer and heterodimers.</text>
</comment>
<comment type="subcellular location">
    <subcellularLocation>
        <location evidence="1">Cell membrane</location>
        <topology evidence="1">Multi-pass membrane protein</topology>
    </subcellularLocation>
</comment>
<comment type="similarity">
    <text evidence="3">Belongs to the Casparian strip membrane proteins (CASP) family.</text>
</comment>
<gene>
    <name type="ORF">RCOM_0864260</name>
</gene>
<feature type="chain" id="PRO_0000391570" description="CASP-like protein 2B1">
    <location>
        <begin position="1"/>
        <end position="202"/>
    </location>
</feature>
<feature type="topological domain" description="Cytoplasmic" evidence="2">
    <location>
        <begin position="1"/>
        <end position="29"/>
    </location>
</feature>
<feature type="transmembrane region" description="Helical" evidence="2">
    <location>
        <begin position="30"/>
        <end position="50"/>
    </location>
</feature>
<feature type="topological domain" description="Extracellular" evidence="2">
    <location>
        <begin position="51"/>
        <end position="72"/>
    </location>
</feature>
<feature type="transmembrane region" description="Helical" evidence="2">
    <location>
        <begin position="73"/>
        <end position="93"/>
    </location>
</feature>
<feature type="topological domain" description="Cytoplasmic" evidence="2">
    <location>
        <begin position="94"/>
        <end position="109"/>
    </location>
</feature>
<feature type="transmembrane region" description="Helical" evidence="2">
    <location>
        <begin position="110"/>
        <end position="130"/>
    </location>
</feature>
<feature type="topological domain" description="Extracellular" evidence="2">
    <location>
        <begin position="131"/>
        <end position="164"/>
    </location>
</feature>
<feature type="transmembrane region" description="Helical" evidence="2">
    <location>
        <begin position="165"/>
        <end position="185"/>
    </location>
</feature>
<feature type="topological domain" description="Cytoplasmic" evidence="2">
    <location>
        <begin position="186"/>
        <end position="202"/>
    </location>
</feature>
<reference key="1">
    <citation type="journal article" date="2010" name="Nat. Biotechnol.">
        <title>Draft genome sequence of the oilseed species Ricinus communis.</title>
        <authorList>
            <person name="Chan A.P."/>
            <person name="Crabtree J."/>
            <person name="Zhao Q."/>
            <person name="Lorenzi H."/>
            <person name="Orvis J."/>
            <person name="Puiu D."/>
            <person name="Melake-Berhan A."/>
            <person name="Jones K.M."/>
            <person name="Redman J."/>
            <person name="Chen G."/>
            <person name="Cahoon E.B."/>
            <person name="Gedil M."/>
            <person name="Stanke M."/>
            <person name="Haas B.J."/>
            <person name="Wortman J.R."/>
            <person name="Fraser-Liggett C.M."/>
            <person name="Ravel J."/>
            <person name="Rabinowicz P.D."/>
        </authorList>
    </citation>
    <scope>NUCLEOTIDE SEQUENCE [LARGE SCALE GENOMIC DNA]</scope>
    <source>
        <strain>cv. Hale</strain>
    </source>
</reference>
<reference key="2">
    <citation type="journal article" date="2014" name="Plant Physiol.">
        <title>Functional and evolutionary analysis of the CASPARIAN STRIP MEMBRANE DOMAIN PROTEIN family.</title>
        <authorList>
            <person name="Roppolo D."/>
            <person name="Boeckmann B."/>
            <person name="Pfister A."/>
            <person name="Boutet E."/>
            <person name="Rubio M.C."/>
            <person name="Denervaud-Tendon V."/>
            <person name="Vermeer J.E."/>
            <person name="Gheyselinck J."/>
            <person name="Xenarios I."/>
            <person name="Geldner N."/>
        </authorList>
    </citation>
    <scope>GENE FAMILY</scope>
    <scope>NOMENCLATURE</scope>
</reference>
<name>CSPLB_RICCO</name>
<accession>B9SA89</accession>
<dbReference type="EMBL" id="EQ973901">
    <property type="protein sequence ID" value="EEF39508.1"/>
    <property type="molecule type" value="Genomic_DNA"/>
</dbReference>
<dbReference type="RefSeq" id="XP_002522908.1">
    <property type="nucleotide sequence ID" value="XM_002522862.2"/>
</dbReference>
<dbReference type="SMR" id="B9SA89"/>
<dbReference type="FunCoup" id="B9SA89">
    <property type="interactions" value="57"/>
</dbReference>
<dbReference type="STRING" id="3988.B9SA89"/>
<dbReference type="KEGG" id="rcu:8282856"/>
<dbReference type="eggNOG" id="ENOG502QQH2">
    <property type="taxonomic scope" value="Eukaryota"/>
</dbReference>
<dbReference type="InParanoid" id="B9SA89"/>
<dbReference type="OMA" id="ICTMYGR"/>
<dbReference type="OrthoDB" id="689701at2759"/>
<dbReference type="Proteomes" id="UP000008311">
    <property type="component" value="Unassembled WGS sequence"/>
</dbReference>
<dbReference type="GO" id="GO:0005886">
    <property type="term" value="C:plasma membrane"/>
    <property type="evidence" value="ECO:0007669"/>
    <property type="project" value="UniProtKB-SubCell"/>
</dbReference>
<dbReference type="InterPro" id="IPR006459">
    <property type="entry name" value="CASP/CASPL"/>
</dbReference>
<dbReference type="InterPro" id="IPR006702">
    <property type="entry name" value="CASP_dom"/>
</dbReference>
<dbReference type="NCBIfam" id="TIGR01569">
    <property type="entry name" value="A_tha_TIGR01569"/>
    <property type="match status" value="1"/>
</dbReference>
<dbReference type="PANTHER" id="PTHR33573:SF64">
    <property type="entry name" value="CASP-LIKE PROTEIN 2B1"/>
    <property type="match status" value="1"/>
</dbReference>
<dbReference type="PANTHER" id="PTHR33573">
    <property type="entry name" value="CASP-LIKE PROTEIN 4A4"/>
    <property type="match status" value="1"/>
</dbReference>
<dbReference type="Pfam" id="PF04535">
    <property type="entry name" value="CASP_dom"/>
    <property type="match status" value="1"/>
</dbReference>
<organism>
    <name type="scientific">Ricinus communis</name>
    <name type="common">Castor bean</name>
    <dbReference type="NCBI Taxonomy" id="3988"/>
    <lineage>
        <taxon>Eukaryota</taxon>
        <taxon>Viridiplantae</taxon>
        <taxon>Streptophyta</taxon>
        <taxon>Embryophyta</taxon>
        <taxon>Tracheophyta</taxon>
        <taxon>Spermatophyta</taxon>
        <taxon>Magnoliopsida</taxon>
        <taxon>eudicotyledons</taxon>
        <taxon>Gunneridae</taxon>
        <taxon>Pentapetalae</taxon>
        <taxon>rosids</taxon>
        <taxon>fabids</taxon>
        <taxon>Malpighiales</taxon>
        <taxon>Euphorbiaceae</taxon>
        <taxon>Acalyphoideae</taxon>
        <taxon>Acalypheae</taxon>
        <taxon>Ricinus</taxon>
    </lineage>
</organism>
<evidence type="ECO:0000250" key="1"/>
<evidence type="ECO:0000255" key="2"/>
<evidence type="ECO:0000305" key="3"/>
<keyword id="KW-1003">Cell membrane</keyword>
<keyword id="KW-0472">Membrane</keyword>
<keyword id="KW-1185">Reference proteome</keyword>
<keyword id="KW-0812">Transmembrane</keyword>
<keyword id="KW-1133">Transmembrane helix</keyword>